<protein>
    <recommendedName>
        <fullName evidence="2">Elongation factor Tu</fullName>
        <shortName evidence="2">EF-Tu</shortName>
        <ecNumber evidence="2">3.6.5.3</ecNumber>
    </recommendedName>
</protein>
<feature type="chain" id="PRO_0000337394" description="Elongation factor Tu">
    <location>
        <begin position="1"/>
        <end position="396"/>
    </location>
</feature>
<feature type="domain" description="tr-type G">
    <location>
        <begin position="10"/>
        <end position="206"/>
    </location>
</feature>
<feature type="region of interest" description="G1" evidence="1">
    <location>
        <begin position="19"/>
        <end position="26"/>
    </location>
</feature>
<feature type="region of interest" description="G2" evidence="1">
    <location>
        <begin position="60"/>
        <end position="64"/>
    </location>
</feature>
<feature type="region of interest" description="G3" evidence="1">
    <location>
        <begin position="81"/>
        <end position="84"/>
    </location>
</feature>
<feature type="region of interest" description="G4" evidence="1">
    <location>
        <begin position="136"/>
        <end position="139"/>
    </location>
</feature>
<feature type="region of interest" description="G5" evidence="1">
    <location>
        <begin position="174"/>
        <end position="176"/>
    </location>
</feature>
<feature type="binding site" evidence="2">
    <location>
        <begin position="19"/>
        <end position="26"/>
    </location>
    <ligand>
        <name>GTP</name>
        <dbReference type="ChEBI" id="CHEBI:37565"/>
    </ligand>
</feature>
<feature type="binding site" evidence="2">
    <location>
        <position position="26"/>
    </location>
    <ligand>
        <name>Mg(2+)</name>
        <dbReference type="ChEBI" id="CHEBI:18420"/>
    </ligand>
</feature>
<feature type="binding site" evidence="2">
    <location>
        <begin position="81"/>
        <end position="85"/>
    </location>
    <ligand>
        <name>GTP</name>
        <dbReference type="ChEBI" id="CHEBI:37565"/>
    </ligand>
</feature>
<feature type="binding site" evidence="2">
    <location>
        <begin position="136"/>
        <end position="139"/>
    </location>
    <ligand>
        <name>GTP</name>
        <dbReference type="ChEBI" id="CHEBI:37565"/>
    </ligand>
</feature>
<sequence>MAKAKFERTKPHVNIGTIGHVDHGKTTLTAAITRVLAERGQAEFKGFDQIDNAPEERERGITIATSHVEYETEKRHYAHVDCPGHADYVKNMITGAAQMDGAILVVSAADGPMPQTREHILLARQVGVPYIVVFLNKADMVDDEELLELVELEIRELLSSYDFPGDDIPIIKGSALKALNGDKDELGSEAIVKLMDAVDAYIPEPERAIDKPFLMPVEDVFSISGRGTVATGRVERGVVKVGEEVEIVGIKTTTKTTVTGVEMFRKLLDEGRAGDNIGALLRGVKREDIERGQVLARPGSITPHTKFKAEAYILTKEEGGRHTPFFNGYRPQFYFRTTDVTGIVDLPAGTEMVMPGDNVAVTVNLITPIAMDEGLRFAIREGGRTVGAGVVSSIIE</sequence>
<dbReference type="EC" id="3.6.5.3" evidence="2"/>
<dbReference type="EMBL" id="CP000148">
    <property type="protein sequence ID" value="ABB30853.1"/>
    <property type="molecule type" value="Genomic_DNA"/>
</dbReference>
<dbReference type="EMBL" id="CP000148">
    <property type="protein sequence ID" value="ABB30866.1"/>
    <property type="molecule type" value="Genomic_DNA"/>
</dbReference>
<dbReference type="RefSeq" id="WP_011365695.1">
    <property type="nucleotide sequence ID" value="NC_007517.1"/>
</dbReference>
<dbReference type="SMR" id="Q39Y08"/>
<dbReference type="STRING" id="269799.Gmet_0611"/>
<dbReference type="KEGG" id="gme:Gmet_0611"/>
<dbReference type="KEGG" id="gme:Gmet_0624"/>
<dbReference type="eggNOG" id="COG0050">
    <property type="taxonomic scope" value="Bacteria"/>
</dbReference>
<dbReference type="HOGENOM" id="CLU_007265_0_0_7"/>
<dbReference type="Proteomes" id="UP000007073">
    <property type="component" value="Chromosome"/>
</dbReference>
<dbReference type="GO" id="GO:0005829">
    <property type="term" value="C:cytosol"/>
    <property type="evidence" value="ECO:0007669"/>
    <property type="project" value="TreeGrafter"/>
</dbReference>
<dbReference type="GO" id="GO:0005525">
    <property type="term" value="F:GTP binding"/>
    <property type="evidence" value="ECO:0007669"/>
    <property type="project" value="UniProtKB-UniRule"/>
</dbReference>
<dbReference type="GO" id="GO:0003924">
    <property type="term" value="F:GTPase activity"/>
    <property type="evidence" value="ECO:0007669"/>
    <property type="project" value="InterPro"/>
</dbReference>
<dbReference type="GO" id="GO:0003746">
    <property type="term" value="F:translation elongation factor activity"/>
    <property type="evidence" value="ECO:0007669"/>
    <property type="project" value="UniProtKB-UniRule"/>
</dbReference>
<dbReference type="CDD" id="cd01884">
    <property type="entry name" value="EF_Tu"/>
    <property type="match status" value="1"/>
</dbReference>
<dbReference type="CDD" id="cd03697">
    <property type="entry name" value="EFTU_II"/>
    <property type="match status" value="1"/>
</dbReference>
<dbReference type="CDD" id="cd03707">
    <property type="entry name" value="EFTU_III"/>
    <property type="match status" value="1"/>
</dbReference>
<dbReference type="FunFam" id="2.40.30.10:FF:000001">
    <property type="entry name" value="Elongation factor Tu"/>
    <property type="match status" value="1"/>
</dbReference>
<dbReference type="FunFam" id="3.40.50.300:FF:000003">
    <property type="entry name" value="Elongation factor Tu"/>
    <property type="match status" value="1"/>
</dbReference>
<dbReference type="Gene3D" id="3.40.50.300">
    <property type="entry name" value="P-loop containing nucleotide triphosphate hydrolases"/>
    <property type="match status" value="1"/>
</dbReference>
<dbReference type="Gene3D" id="2.40.30.10">
    <property type="entry name" value="Translation factors"/>
    <property type="match status" value="2"/>
</dbReference>
<dbReference type="HAMAP" id="MF_00118_B">
    <property type="entry name" value="EF_Tu_B"/>
    <property type="match status" value="1"/>
</dbReference>
<dbReference type="InterPro" id="IPR041709">
    <property type="entry name" value="EF-Tu_GTP-bd"/>
</dbReference>
<dbReference type="InterPro" id="IPR050055">
    <property type="entry name" value="EF-Tu_GTPase"/>
</dbReference>
<dbReference type="InterPro" id="IPR004161">
    <property type="entry name" value="EFTu-like_2"/>
</dbReference>
<dbReference type="InterPro" id="IPR033720">
    <property type="entry name" value="EFTU_2"/>
</dbReference>
<dbReference type="InterPro" id="IPR031157">
    <property type="entry name" value="G_TR_CS"/>
</dbReference>
<dbReference type="InterPro" id="IPR027417">
    <property type="entry name" value="P-loop_NTPase"/>
</dbReference>
<dbReference type="InterPro" id="IPR005225">
    <property type="entry name" value="Small_GTP-bd"/>
</dbReference>
<dbReference type="InterPro" id="IPR000795">
    <property type="entry name" value="T_Tr_GTP-bd_dom"/>
</dbReference>
<dbReference type="InterPro" id="IPR009000">
    <property type="entry name" value="Transl_B-barrel_sf"/>
</dbReference>
<dbReference type="InterPro" id="IPR009001">
    <property type="entry name" value="Transl_elong_EF1A/Init_IF2_C"/>
</dbReference>
<dbReference type="InterPro" id="IPR004541">
    <property type="entry name" value="Transl_elong_EFTu/EF1A_bac/org"/>
</dbReference>
<dbReference type="InterPro" id="IPR004160">
    <property type="entry name" value="Transl_elong_EFTu/EF1A_C"/>
</dbReference>
<dbReference type="NCBIfam" id="TIGR00485">
    <property type="entry name" value="EF-Tu"/>
    <property type="match status" value="1"/>
</dbReference>
<dbReference type="NCBIfam" id="NF000766">
    <property type="entry name" value="PRK00049.1"/>
    <property type="match status" value="1"/>
</dbReference>
<dbReference type="NCBIfam" id="NF009372">
    <property type="entry name" value="PRK12735.1"/>
    <property type="match status" value="1"/>
</dbReference>
<dbReference type="NCBIfam" id="NF009373">
    <property type="entry name" value="PRK12736.1"/>
    <property type="match status" value="1"/>
</dbReference>
<dbReference type="NCBIfam" id="TIGR00231">
    <property type="entry name" value="small_GTP"/>
    <property type="match status" value="1"/>
</dbReference>
<dbReference type="PANTHER" id="PTHR43721:SF22">
    <property type="entry name" value="ELONGATION FACTOR TU, MITOCHONDRIAL"/>
    <property type="match status" value="1"/>
</dbReference>
<dbReference type="PANTHER" id="PTHR43721">
    <property type="entry name" value="ELONGATION FACTOR TU-RELATED"/>
    <property type="match status" value="1"/>
</dbReference>
<dbReference type="Pfam" id="PF00009">
    <property type="entry name" value="GTP_EFTU"/>
    <property type="match status" value="1"/>
</dbReference>
<dbReference type="Pfam" id="PF03144">
    <property type="entry name" value="GTP_EFTU_D2"/>
    <property type="match status" value="1"/>
</dbReference>
<dbReference type="Pfam" id="PF03143">
    <property type="entry name" value="GTP_EFTU_D3"/>
    <property type="match status" value="1"/>
</dbReference>
<dbReference type="PRINTS" id="PR00315">
    <property type="entry name" value="ELONGATNFCT"/>
</dbReference>
<dbReference type="SUPFAM" id="SSF50465">
    <property type="entry name" value="EF-Tu/eEF-1alpha/eIF2-gamma C-terminal domain"/>
    <property type="match status" value="1"/>
</dbReference>
<dbReference type="SUPFAM" id="SSF52540">
    <property type="entry name" value="P-loop containing nucleoside triphosphate hydrolases"/>
    <property type="match status" value="1"/>
</dbReference>
<dbReference type="SUPFAM" id="SSF50447">
    <property type="entry name" value="Translation proteins"/>
    <property type="match status" value="1"/>
</dbReference>
<dbReference type="PROSITE" id="PS00301">
    <property type="entry name" value="G_TR_1"/>
    <property type="match status" value="1"/>
</dbReference>
<dbReference type="PROSITE" id="PS51722">
    <property type="entry name" value="G_TR_2"/>
    <property type="match status" value="1"/>
</dbReference>
<proteinExistence type="inferred from homology"/>
<gene>
    <name evidence="2" type="primary">tuf1</name>
    <name type="ordered locus">Gmet_0611</name>
</gene>
<gene>
    <name evidence="2" type="primary">tuf2</name>
    <name type="ordered locus">Gmet_0624</name>
</gene>
<evidence type="ECO:0000250" key="1"/>
<evidence type="ECO:0000255" key="2">
    <source>
        <dbReference type="HAMAP-Rule" id="MF_00118"/>
    </source>
</evidence>
<reference key="1">
    <citation type="journal article" date="2009" name="BMC Microbiol.">
        <title>The genome sequence of Geobacter metallireducens: features of metabolism, physiology and regulation common and dissimilar to Geobacter sulfurreducens.</title>
        <authorList>
            <person name="Aklujkar M."/>
            <person name="Krushkal J."/>
            <person name="DiBartolo G."/>
            <person name="Lapidus A."/>
            <person name="Land M.L."/>
            <person name="Lovley D.R."/>
        </authorList>
    </citation>
    <scope>NUCLEOTIDE SEQUENCE [LARGE SCALE GENOMIC DNA]</scope>
    <source>
        <strain>ATCC 53774 / DSM 7210 / GS-15</strain>
    </source>
</reference>
<name>EFTU_GEOMG</name>
<accession>Q39Y08</accession>
<organism>
    <name type="scientific">Geobacter metallireducens (strain ATCC 53774 / DSM 7210 / GS-15)</name>
    <dbReference type="NCBI Taxonomy" id="269799"/>
    <lineage>
        <taxon>Bacteria</taxon>
        <taxon>Pseudomonadati</taxon>
        <taxon>Thermodesulfobacteriota</taxon>
        <taxon>Desulfuromonadia</taxon>
        <taxon>Geobacterales</taxon>
        <taxon>Geobacteraceae</taxon>
        <taxon>Geobacter</taxon>
    </lineage>
</organism>
<keyword id="KW-0963">Cytoplasm</keyword>
<keyword id="KW-0251">Elongation factor</keyword>
<keyword id="KW-0342">GTP-binding</keyword>
<keyword id="KW-0378">Hydrolase</keyword>
<keyword id="KW-0460">Magnesium</keyword>
<keyword id="KW-0479">Metal-binding</keyword>
<keyword id="KW-0547">Nucleotide-binding</keyword>
<keyword id="KW-0648">Protein biosynthesis</keyword>
<keyword id="KW-1185">Reference proteome</keyword>
<comment type="function">
    <text evidence="2">GTP hydrolase that promotes the GTP-dependent binding of aminoacyl-tRNA to the A-site of ribosomes during protein biosynthesis.</text>
</comment>
<comment type="catalytic activity">
    <reaction evidence="2">
        <text>GTP + H2O = GDP + phosphate + H(+)</text>
        <dbReference type="Rhea" id="RHEA:19669"/>
        <dbReference type="ChEBI" id="CHEBI:15377"/>
        <dbReference type="ChEBI" id="CHEBI:15378"/>
        <dbReference type="ChEBI" id="CHEBI:37565"/>
        <dbReference type="ChEBI" id="CHEBI:43474"/>
        <dbReference type="ChEBI" id="CHEBI:58189"/>
        <dbReference type="EC" id="3.6.5.3"/>
    </reaction>
    <physiologicalReaction direction="left-to-right" evidence="2">
        <dbReference type="Rhea" id="RHEA:19670"/>
    </physiologicalReaction>
</comment>
<comment type="subunit">
    <text evidence="2">Monomer.</text>
</comment>
<comment type="subcellular location">
    <subcellularLocation>
        <location evidence="2">Cytoplasm</location>
    </subcellularLocation>
</comment>
<comment type="similarity">
    <text evidence="2">Belongs to the TRAFAC class translation factor GTPase superfamily. Classic translation factor GTPase family. EF-Tu/EF-1A subfamily.</text>
</comment>